<comment type="function">
    <text evidence="1 2">RuBisCO catalyzes two reactions: the carboxylation of D-ribulose 1,5-bisphosphate, the primary event in carbon dioxide fixation, as well as the oxidative fragmentation of the pentose substrate. Both reactions occur simultaneously and in competition at the same active site.</text>
</comment>
<comment type="catalytic activity">
    <reaction evidence="1 2">
        <text>2 (2R)-3-phosphoglycerate + 2 H(+) = D-ribulose 1,5-bisphosphate + CO2 + H2O</text>
        <dbReference type="Rhea" id="RHEA:23124"/>
        <dbReference type="ChEBI" id="CHEBI:15377"/>
        <dbReference type="ChEBI" id="CHEBI:15378"/>
        <dbReference type="ChEBI" id="CHEBI:16526"/>
        <dbReference type="ChEBI" id="CHEBI:57870"/>
        <dbReference type="ChEBI" id="CHEBI:58272"/>
        <dbReference type="EC" id="4.1.1.39"/>
    </reaction>
</comment>
<comment type="catalytic activity">
    <reaction evidence="1 2">
        <text>D-ribulose 1,5-bisphosphate + O2 = 2-phosphoglycolate + (2R)-3-phosphoglycerate + 2 H(+)</text>
        <dbReference type="Rhea" id="RHEA:36631"/>
        <dbReference type="ChEBI" id="CHEBI:15378"/>
        <dbReference type="ChEBI" id="CHEBI:15379"/>
        <dbReference type="ChEBI" id="CHEBI:57870"/>
        <dbReference type="ChEBI" id="CHEBI:58033"/>
        <dbReference type="ChEBI" id="CHEBI:58272"/>
    </reaction>
</comment>
<comment type="cofactor">
    <cofactor evidence="1">
        <name>Mg(2+)</name>
        <dbReference type="ChEBI" id="CHEBI:18420"/>
    </cofactor>
    <text evidence="1">Binds 1 Mg(2+) ion per subunit.</text>
</comment>
<comment type="biophysicochemical properties">
    <kinetics>
        <KM evidence="2">23 uM for ribulose 1,5-bisphosphate</KM>
        <KM evidence="2">100 uM for CO(2)</KM>
        <Vmax evidence="2">1.8 umol/min/mg enzyme with CO(2) as substrate</Vmax>
        <text>The CO(2)/O(2) specificity factor (tau) is 44.</text>
    </kinetics>
</comment>
<comment type="subunit">
    <text evidence="1 3">Heterohexadecamer of 8 large chains and 8 small chains.</text>
</comment>
<comment type="miscellaneous">
    <text evidence="1">The basic functional RuBisCO is composed of a large chain homodimer in a 'head-to-tail' conformation. In form I RuBisCO this homodimer is arranged in a barrel-like tetramer with the small subunits forming a tetrameric 'cap' on each end of the 'barrel'.</text>
</comment>
<comment type="similarity">
    <text evidence="1">Belongs to the RuBisCO large chain family. Type I subfamily.</text>
</comment>
<name>RBL_XANFL</name>
<proteinExistence type="evidence at protein level"/>
<accession>P23011</accession>
<keyword id="KW-0113">Calvin cycle</keyword>
<keyword id="KW-0120">Carbon dioxide fixation</keyword>
<keyword id="KW-0456">Lyase</keyword>
<keyword id="KW-0460">Magnesium</keyword>
<keyword id="KW-0479">Metal-binding</keyword>
<keyword id="KW-0503">Monooxygenase</keyword>
<keyword id="KW-0560">Oxidoreductase</keyword>
<sequence>MGADAAIGQIKDAKKRYAAGVLKYAQMGYWDGDYQPKDTDILALFRVTPQDGVDPVEAAAAVAGESSTATWTVVWTDRLTAADMYRAKAYKVEPVPGQPGQYFCWVAYELDLFEEGSIANLTASIIGNVFSFKPLKACRLEDMRLPVAYVKTFRGPPTGIVVERERLDKFGRPLLGATTKPKLGLSGKNYGRVVYEGLKGGLDFVKDDENINSQPFMHWRDRFLYCMEAVNKAQAETGEVKGHYLNITAGTMEEMYRRADFAKELGSVVVMVDLIVGWTAIQSISNWCRENDMLLHMHRAGHGTYTRQKGHGISFRVIAKWLRLAGVDHLHTGTAVGKLEGDPMTVQGYYNVCREDVTRTDYTRGIFFDQDWAGLRKVMPVASGGIHAGQMHQLIDLFGEDVVLQFGGGTIGHPDGIQAGAIANRVALETMILARNEGRDIKNEGPEILVEAAKWCQPLRAALDTWGEVTFNYASTDTSDFVPTASVA</sequence>
<protein>
    <recommendedName>
        <fullName evidence="1">Ribulose bisphosphate carboxylase large chain</fullName>
        <shortName evidence="1">RuBisCO large subunit</shortName>
        <ecNumber evidence="1 2">4.1.1.39</ecNumber>
    </recommendedName>
</protein>
<gene>
    <name evidence="1" type="primary">cbbL</name>
    <name type="synonym">cfxL</name>
</gene>
<dbReference type="EC" id="4.1.1.39" evidence="1 2"/>
<dbReference type="EMBL" id="X17252">
    <property type="protein sequence ID" value="CAA35115.1"/>
    <property type="molecule type" value="Genomic_DNA"/>
</dbReference>
<dbReference type="PIR" id="S13573">
    <property type="entry name" value="RKQXLX"/>
</dbReference>
<dbReference type="SMR" id="P23011"/>
<dbReference type="SABIO-RK" id="P23011"/>
<dbReference type="GO" id="GO:0000287">
    <property type="term" value="F:magnesium ion binding"/>
    <property type="evidence" value="ECO:0007669"/>
    <property type="project" value="UniProtKB-UniRule"/>
</dbReference>
<dbReference type="GO" id="GO:0004497">
    <property type="term" value="F:monooxygenase activity"/>
    <property type="evidence" value="ECO:0007669"/>
    <property type="project" value="UniProtKB-KW"/>
</dbReference>
<dbReference type="GO" id="GO:0016984">
    <property type="term" value="F:ribulose-bisphosphate carboxylase activity"/>
    <property type="evidence" value="ECO:0007669"/>
    <property type="project" value="UniProtKB-UniRule"/>
</dbReference>
<dbReference type="GO" id="GO:0019253">
    <property type="term" value="P:reductive pentose-phosphate cycle"/>
    <property type="evidence" value="ECO:0007669"/>
    <property type="project" value="UniProtKB-UniRule"/>
</dbReference>
<dbReference type="CDD" id="cd08212">
    <property type="entry name" value="RuBisCO_large_I"/>
    <property type="match status" value="1"/>
</dbReference>
<dbReference type="Gene3D" id="3.20.20.110">
    <property type="entry name" value="Ribulose bisphosphate carboxylase, large subunit, C-terminal domain"/>
    <property type="match status" value="1"/>
</dbReference>
<dbReference type="Gene3D" id="3.30.70.150">
    <property type="entry name" value="RuBisCO large subunit, N-terminal domain"/>
    <property type="match status" value="1"/>
</dbReference>
<dbReference type="HAMAP" id="MF_01338">
    <property type="entry name" value="RuBisCO_L_type1"/>
    <property type="match status" value="1"/>
</dbReference>
<dbReference type="InterPro" id="IPR033966">
    <property type="entry name" value="RuBisCO"/>
</dbReference>
<dbReference type="InterPro" id="IPR020878">
    <property type="entry name" value="RuBisCo_large_chain_AS"/>
</dbReference>
<dbReference type="InterPro" id="IPR000685">
    <property type="entry name" value="RuBisCO_lsu_C"/>
</dbReference>
<dbReference type="InterPro" id="IPR036376">
    <property type="entry name" value="RuBisCO_lsu_C_sf"/>
</dbReference>
<dbReference type="InterPro" id="IPR017443">
    <property type="entry name" value="RuBisCO_lsu_fd_N"/>
</dbReference>
<dbReference type="InterPro" id="IPR036422">
    <property type="entry name" value="RuBisCO_lsu_N_sf"/>
</dbReference>
<dbReference type="InterPro" id="IPR020888">
    <property type="entry name" value="RuBisCO_lsuI"/>
</dbReference>
<dbReference type="NCBIfam" id="NF003252">
    <property type="entry name" value="PRK04208.1"/>
    <property type="match status" value="1"/>
</dbReference>
<dbReference type="PANTHER" id="PTHR42704">
    <property type="entry name" value="RIBULOSE BISPHOSPHATE CARBOXYLASE"/>
    <property type="match status" value="1"/>
</dbReference>
<dbReference type="PANTHER" id="PTHR42704:SF17">
    <property type="entry name" value="RIBULOSE BISPHOSPHATE CARBOXYLASE LARGE CHAIN"/>
    <property type="match status" value="1"/>
</dbReference>
<dbReference type="Pfam" id="PF00016">
    <property type="entry name" value="RuBisCO_large"/>
    <property type="match status" value="1"/>
</dbReference>
<dbReference type="Pfam" id="PF02788">
    <property type="entry name" value="RuBisCO_large_N"/>
    <property type="match status" value="1"/>
</dbReference>
<dbReference type="SFLD" id="SFLDG01052">
    <property type="entry name" value="RuBisCO"/>
    <property type="match status" value="1"/>
</dbReference>
<dbReference type="SFLD" id="SFLDS00014">
    <property type="entry name" value="RuBisCO"/>
    <property type="match status" value="1"/>
</dbReference>
<dbReference type="SFLD" id="SFLDG00301">
    <property type="entry name" value="RuBisCO-like_proteins"/>
    <property type="match status" value="1"/>
</dbReference>
<dbReference type="SUPFAM" id="SSF51649">
    <property type="entry name" value="RuBisCo, C-terminal domain"/>
    <property type="match status" value="1"/>
</dbReference>
<dbReference type="SUPFAM" id="SSF54966">
    <property type="entry name" value="RuBisCO, large subunit, small (N-terminal) domain"/>
    <property type="match status" value="1"/>
</dbReference>
<dbReference type="PROSITE" id="PS00157">
    <property type="entry name" value="RUBISCO_LARGE"/>
    <property type="match status" value="1"/>
</dbReference>
<feature type="chain" id="PRO_0000062661" description="Ribulose bisphosphate carboxylase large chain">
    <location>
        <begin position="1"/>
        <end position="488"/>
    </location>
</feature>
<feature type="active site" description="Proton acceptor" evidence="1">
    <location>
        <position position="180"/>
    </location>
</feature>
<feature type="active site" description="Proton acceptor" evidence="1">
    <location>
        <position position="298"/>
    </location>
</feature>
<feature type="binding site" description="in homodimeric partner" evidence="1">
    <location>
        <position position="128"/>
    </location>
    <ligand>
        <name>substrate</name>
    </ligand>
</feature>
<feature type="binding site" evidence="1">
    <location>
        <position position="178"/>
    </location>
    <ligand>
        <name>substrate</name>
    </ligand>
</feature>
<feature type="binding site" evidence="1">
    <location>
        <position position="182"/>
    </location>
    <ligand>
        <name>substrate</name>
    </ligand>
</feature>
<feature type="binding site" description="via carbamate group" evidence="1">
    <location>
        <position position="206"/>
    </location>
    <ligand>
        <name>Mg(2+)</name>
        <dbReference type="ChEBI" id="CHEBI:18420"/>
    </ligand>
</feature>
<feature type="binding site" evidence="1">
    <location>
        <position position="208"/>
    </location>
    <ligand>
        <name>Mg(2+)</name>
        <dbReference type="ChEBI" id="CHEBI:18420"/>
    </ligand>
</feature>
<feature type="binding site" evidence="1">
    <location>
        <position position="209"/>
    </location>
    <ligand>
        <name>Mg(2+)</name>
        <dbReference type="ChEBI" id="CHEBI:18420"/>
    </ligand>
</feature>
<feature type="binding site" evidence="1">
    <location>
        <position position="299"/>
    </location>
    <ligand>
        <name>substrate</name>
    </ligand>
</feature>
<feature type="binding site" evidence="1">
    <location>
        <position position="331"/>
    </location>
    <ligand>
        <name>substrate</name>
    </ligand>
</feature>
<feature type="binding site" evidence="1">
    <location>
        <position position="383"/>
    </location>
    <ligand>
        <name>substrate</name>
    </ligand>
</feature>
<feature type="site" description="Transition state stabilizer" evidence="1">
    <location>
        <position position="338"/>
    </location>
</feature>
<feature type="modified residue" description="N6-carboxylysine" evidence="1">
    <location>
        <position position="206"/>
    </location>
</feature>
<evidence type="ECO:0000255" key="1">
    <source>
        <dbReference type="HAMAP-Rule" id="MF_01338"/>
    </source>
</evidence>
<evidence type="ECO:0000269" key="2">
    <source>
    </source>
</evidence>
<evidence type="ECO:0000305" key="3">
    <source>
    </source>
</evidence>
<reference key="1">
    <citation type="journal article" date="1991" name="Mol. Gen. Genet.">
        <title>Identification and organization of carbon dioxide fixation genes in Xanthobacter flavus H4-14.</title>
        <authorList>
            <person name="Meijer W.G."/>
            <person name="Arnberg A.C."/>
            <person name="Enequist H.G."/>
            <person name="Terpstra P."/>
            <person name="Lidstrom M.E."/>
            <person name="Dijkhuizen L."/>
        </authorList>
    </citation>
    <scope>NUCLEOTIDE SEQUENCE [GENOMIC DNA]</scope>
    <source>
        <strain>H4-14</strain>
    </source>
</reference>
<reference key="2">
    <citation type="journal article" date="1999" name="Arch. Biochem. Biophys.">
        <title>Closely related form I ribulose bisphosphate carboxylase/oxygenase molecules that possess different CO2/O2 substrate specificities.</title>
        <authorList>
            <person name="Horken K.M."/>
            <person name="Tabita F.R."/>
        </authorList>
    </citation>
    <scope>FUNCTION</scope>
    <scope>CATALYTIC ACTIVITY</scope>
    <scope>BIOPHYSICOCHEMICAL PROPERTIES</scope>
    <source>
        <strain>H4-14</strain>
    </source>
</reference>
<organism>
    <name type="scientific">Xanthobacter flavus</name>
    <dbReference type="NCBI Taxonomy" id="281"/>
    <lineage>
        <taxon>Bacteria</taxon>
        <taxon>Pseudomonadati</taxon>
        <taxon>Pseudomonadota</taxon>
        <taxon>Alphaproteobacteria</taxon>
        <taxon>Hyphomicrobiales</taxon>
        <taxon>Xanthobacteraceae</taxon>
        <taxon>Xanthobacter</taxon>
    </lineage>
</organism>